<feature type="chain" id="PRO_0000297422" description="3-methyl-2-oxobutanoate hydroxymethyltransferase">
    <location>
        <begin position="1"/>
        <end position="288"/>
    </location>
</feature>
<feature type="active site" description="Proton acceptor" evidence="1">
    <location>
        <position position="185"/>
    </location>
</feature>
<feature type="binding site" evidence="1">
    <location>
        <begin position="48"/>
        <end position="49"/>
    </location>
    <ligand>
        <name>3-methyl-2-oxobutanoate</name>
        <dbReference type="ChEBI" id="CHEBI:11851"/>
    </ligand>
</feature>
<feature type="binding site" evidence="1">
    <location>
        <position position="48"/>
    </location>
    <ligand>
        <name>Mg(2+)</name>
        <dbReference type="ChEBI" id="CHEBI:18420"/>
    </ligand>
</feature>
<feature type="binding site" evidence="1">
    <location>
        <position position="87"/>
    </location>
    <ligand>
        <name>3-methyl-2-oxobutanoate</name>
        <dbReference type="ChEBI" id="CHEBI:11851"/>
    </ligand>
</feature>
<feature type="binding site" evidence="1">
    <location>
        <position position="87"/>
    </location>
    <ligand>
        <name>Mg(2+)</name>
        <dbReference type="ChEBI" id="CHEBI:18420"/>
    </ligand>
</feature>
<feature type="binding site" evidence="1">
    <location>
        <position position="116"/>
    </location>
    <ligand>
        <name>3-methyl-2-oxobutanoate</name>
        <dbReference type="ChEBI" id="CHEBI:11851"/>
    </ligand>
</feature>
<feature type="binding site" evidence="1">
    <location>
        <position position="118"/>
    </location>
    <ligand>
        <name>Mg(2+)</name>
        <dbReference type="ChEBI" id="CHEBI:18420"/>
    </ligand>
</feature>
<comment type="function">
    <text evidence="1">Catalyzes the reversible reaction in which hydroxymethyl group from 5,10-methylenetetrahydrofolate is transferred onto alpha-ketoisovalerate to form ketopantoate.</text>
</comment>
<comment type="catalytic activity">
    <reaction evidence="1">
        <text>3-methyl-2-oxobutanoate + (6R)-5,10-methylene-5,6,7,8-tetrahydrofolate + H2O = 2-dehydropantoate + (6S)-5,6,7,8-tetrahydrofolate</text>
        <dbReference type="Rhea" id="RHEA:11824"/>
        <dbReference type="ChEBI" id="CHEBI:11561"/>
        <dbReference type="ChEBI" id="CHEBI:11851"/>
        <dbReference type="ChEBI" id="CHEBI:15377"/>
        <dbReference type="ChEBI" id="CHEBI:15636"/>
        <dbReference type="ChEBI" id="CHEBI:57453"/>
        <dbReference type="EC" id="2.1.2.11"/>
    </reaction>
</comment>
<comment type="cofactor">
    <cofactor evidence="1">
        <name>Mg(2+)</name>
        <dbReference type="ChEBI" id="CHEBI:18420"/>
    </cofactor>
    <text evidence="1">Binds 1 Mg(2+) ion per subunit.</text>
</comment>
<comment type="pathway">
    <text evidence="1">Cofactor biosynthesis; coenzyme A biosynthesis.</text>
</comment>
<comment type="subunit">
    <text evidence="1">Homodecamer; pentamer of dimers.</text>
</comment>
<comment type="subcellular location">
    <subcellularLocation>
        <location evidence="1">Cytoplasm</location>
    </subcellularLocation>
</comment>
<comment type="similarity">
    <text evidence="1">Belongs to the PanB family.</text>
</comment>
<evidence type="ECO:0000255" key="1">
    <source>
        <dbReference type="HAMAP-Rule" id="MF_00156"/>
    </source>
</evidence>
<gene>
    <name evidence="1" type="primary">panB</name>
    <name type="ordered locus">Hbut_1523</name>
</gene>
<keyword id="KW-0173">Coenzyme A biosynthesis</keyword>
<keyword id="KW-0963">Cytoplasm</keyword>
<keyword id="KW-0460">Magnesium</keyword>
<keyword id="KW-0479">Metal-binding</keyword>
<keyword id="KW-1185">Reference proteome</keyword>
<keyword id="KW-0808">Transferase</keyword>
<proteinExistence type="inferred from homology"/>
<organism>
    <name type="scientific">Hyperthermus butylicus (strain DSM 5456 / JCM 9403 / PLM1-5)</name>
    <dbReference type="NCBI Taxonomy" id="415426"/>
    <lineage>
        <taxon>Archaea</taxon>
        <taxon>Thermoproteota</taxon>
        <taxon>Thermoprotei</taxon>
        <taxon>Desulfurococcales</taxon>
        <taxon>Pyrodictiaceae</taxon>
        <taxon>Hyperthermus</taxon>
    </lineage>
</organism>
<name>PANB_HYPBU</name>
<reference key="1">
    <citation type="journal article" date="2007" name="Archaea">
        <title>The genome of Hyperthermus butylicus: a sulfur-reducing, peptide fermenting, neutrophilic Crenarchaeote growing up to 108 degrees C.</title>
        <authorList>
            <person name="Bruegger K."/>
            <person name="Chen L."/>
            <person name="Stark M."/>
            <person name="Zibat A."/>
            <person name="Redder P."/>
            <person name="Ruepp A."/>
            <person name="Awayez M."/>
            <person name="She Q."/>
            <person name="Garrett R.A."/>
            <person name="Klenk H.-P."/>
        </authorList>
    </citation>
    <scope>NUCLEOTIDE SEQUENCE [LARGE SCALE GENOMIC DNA]</scope>
    <source>
        <strain>DSM 5456 / JCM 9403 / PLM1-5</strain>
    </source>
</reference>
<accession>A2BMY4</accession>
<protein>
    <recommendedName>
        <fullName evidence="1">3-methyl-2-oxobutanoate hydroxymethyltransferase</fullName>
        <ecNumber evidence="1">2.1.2.11</ecNumber>
    </recommendedName>
    <alternativeName>
        <fullName evidence="1">Ketopantoate hydroxymethyltransferase</fullName>
        <shortName evidence="1">KPHMT</shortName>
    </alternativeName>
</protein>
<dbReference type="EC" id="2.1.2.11" evidence="1"/>
<dbReference type="EMBL" id="CP000493">
    <property type="protein sequence ID" value="ABM81345.1"/>
    <property type="molecule type" value="Genomic_DNA"/>
</dbReference>
<dbReference type="RefSeq" id="WP_011822663.1">
    <property type="nucleotide sequence ID" value="NC_008818.1"/>
</dbReference>
<dbReference type="SMR" id="A2BMY4"/>
<dbReference type="STRING" id="415426.Hbut_1523"/>
<dbReference type="EnsemblBacteria" id="ABM81345">
    <property type="protein sequence ID" value="ABM81345"/>
    <property type="gene ID" value="Hbut_1523"/>
</dbReference>
<dbReference type="GeneID" id="4782815"/>
<dbReference type="KEGG" id="hbu:Hbut_1523"/>
<dbReference type="eggNOG" id="arCOG00584">
    <property type="taxonomic scope" value="Archaea"/>
</dbReference>
<dbReference type="HOGENOM" id="CLU_036645_1_0_2"/>
<dbReference type="OrthoDB" id="8414at2157"/>
<dbReference type="UniPathway" id="UPA00241"/>
<dbReference type="Proteomes" id="UP000002593">
    <property type="component" value="Chromosome"/>
</dbReference>
<dbReference type="GO" id="GO:0005737">
    <property type="term" value="C:cytoplasm"/>
    <property type="evidence" value="ECO:0007669"/>
    <property type="project" value="UniProtKB-SubCell"/>
</dbReference>
<dbReference type="GO" id="GO:0003864">
    <property type="term" value="F:3-methyl-2-oxobutanoate hydroxymethyltransferase activity"/>
    <property type="evidence" value="ECO:0007669"/>
    <property type="project" value="UniProtKB-UniRule"/>
</dbReference>
<dbReference type="GO" id="GO:0000287">
    <property type="term" value="F:magnesium ion binding"/>
    <property type="evidence" value="ECO:0007669"/>
    <property type="project" value="TreeGrafter"/>
</dbReference>
<dbReference type="GO" id="GO:0015937">
    <property type="term" value="P:coenzyme A biosynthetic process"/>
    <property type="evidence" value="ECO:0007669"/>
    <property type="project" value="UniProtKB-UniRule"/>
</dbReference>
<dbReference type="GO" id="GO:0015940">
    <property type="term" value="P:pantothenate biosynthetic process"/>
    <property type="evidence" value="ECO:0007669"/>
    <property type="project" value="InterPro"/>
</dbReference>
<dbReference type="CDD" id="cd06557">
    <property type="entry name" value="KPHMT-like"/>
    <property type="match status" value="1"/>
</dbReference>
<dbReference type="FunFam" id="3.20.20.60:FF:000003">
    <property type="entry name" value="3-methyl-2-oxobutanoate hydroxymethyltransferase"/>
    <property type="match status" value="1"/>
</dbReference>
<dbReference type="Gene3D" id="3.20.20.60">
    <property type="entry name" value="Phosphoenolpyruvate-binding domains"/>
    <property type="match status" value="1"/>
</dbReference>
<dbReference type="HAMAP" id="MF_00156">
    <property type="entry name" value="PanB"/>
    <property type="match status" value="1"/>
</dbReference>
<dbReference type="InterPro" id="IPR003700">
    <property type="entry name" value="Pantoate_hydroxy_MeTrfase"/>
</dbReference>
<dbReference type="InterPro" id="IPR015813">
    <property type="entry name" value="Pyrv/PenolPyrv_kinase-like_dom"/>
</dbReference>
<dbReference type="InterPro" id="IPR040442">
    <property type="entry name" value="Pyrv_kinase-like_dom_sf"/>
</dbReference>
<dbReference type="NCBIfam" id="TIGR00222">
    <property type="entry name" value="panB"/>
    <property type="match status" value="1"/>
</dbReference>
<dbReference type="NCBIfam" id="NF001452">
    <property type="entry name" value="PRK00311.1"/>
    <property type="match status" value="1"/>
</dbReference>
<dbReference type="PANTHER" id="PTHR20881">
    <property type="entry name" value="3-METHYL-2-OXOBUTANOATE HYDROXYMETHYLTRANSFERASE"/>
    <property type="match status" value="1"/>
</dbReference>
<dbReference type="PANTHER" id="PTHR20881:SF0">
    <property type="entry name" value="3-METHYL-2-OXOBUTANOATE HYDROXYMETHYLTRANSFERASE"/>
    <property type="match status" value="1"/>
</dbReference>
<dbReference type="Pfam" id="PF02548">
    <property type="entry name" value="Pantoate_transf"/>
    <property type="match status" value="1"/>
</dbReference>
<dbReference type="PIRSF" id="PIRSF000388">
    <property type="entry name" value="Pantoate_hydroxy_MeTrfase"/>
    <property type="match status" value="1"/>
</dbReference>
<dbReference type="SUPFAM" id="SSF51621">
    <property type="entry name" value="Phosphoenolpyruvate/pyruvate domain"/>
    <property type="match status" value="1"/>
</dbReference>
<sequence length="288" mass="31092">MAGREKVTVRDIVRAKQRGERIVMVTAYDYITAKLVDEAGVDMILVGDSLGMVVLGLPSTHQVTLEDMERHTAAVARAQPRALIVADMPFMSYEASTRDAVLNAGRLIAAGADAVKIEGGASYSDTIRALVRAGIPVVAHVGLTPQRYKLLGGYRLAGKTASEAMEVIREAIGAEEAGAFAVVIEFTAWEVAREITRKLSIPTICIGSGPYCDGQVLVIHDLLGLTPTPPPFAKKYVDLAAIIRRAVSEYASDVRNGRFPGEGMYWGMKRGEYEKLQRLINEQAGSGD</sequence>